<evidence type="ECO:0000305" key="1"/>
<feature type="signal peptide">
    <location>
        <begin position="1"/>
        <end position="24"/>
    </location>
</feature>
<feature type="chain" id="PRO_0000303005" description="10 kDa prolamin">
    <location>
        <begin position="25"/>
        <end position="134"/>
    </location>
</feature>
<feature type="region of interest" description="Octapeptide unique to cereal prolamins">
    <location>
        <begin position="69"/>
        <end position="76"/>
    </location>
</feature>
<feature type="sequence conflict" description="In Ref. 2; CAA59142." evidence="1" ref="2">
    <original>Q</original>
    <variation>L</variation>
    <location>
        <position position="69"/>
    </location>
</feature>
<accession>A2XMB2</accession>
<accession>P15839</accession>
<accession>Q40729</accession>
<accession>Q53X24</accession>
<reference key="1">
    <citation type="journal article" date="1990" name="Plant Mol. Biol.">
        <title>Variation in the nucleotide sequence of a prolamin gene family in wild rice.</title>
        <authorList>
            <person name="Barbier P."/>
            <person name="Ishihama A."/>
        </authorList>
    </citation>
    <scope>NUCLEOTIDE SEQUENCE [GENOMIC DNA]</scope>
</reference>
<reference key="2">
    <citation type="online journal article" date="1995" name="Plant Gene Register">
        <title>A cDNA sequence of 10 kDa prolamin from long grain rice (Oryza sativa L. subsp.indica).</title>
        <authorList>
            <person name="Zhu Z.P."/>
        </authorList>
        <locator>PGR95-033</locator>
    </citation>
    <scope>NUCLEOTIDE SEQUENCE [MRNA]</scope>
</reference>
<reference key="3">
    <citation type="submission" date="1994-10" db="EMBL/GenBank/DDBJ databases">
        <title>Cloning and sequence comparison of the gene encoding rice 10KD prolamin.</title>
        <authorList>
            <person name="You L."/>
            <person name="Xie M."/>
            <person name="Gu H."/>
            <person name="Qu L."/>
            <person name="Liang X."/>
            <person name="Chen Z."/>
        </authorList>
    </citation>
    <scope>NUCLEOTIDE SEQUENCE [GENOMIC DNA]</scope>
</reference>
<reference key="4">
    <citation type="journal article" date="2005" name="PLoS Biol.">
        <title>The genomes of Oryza sativa: a history of duplications.</title>
        <authorList>
            <person name="Yu J."/>
            <person name="Wang J."/>
            <person name="Lin W."/>
            <person name="Li S."/>
            <person name="Li H."/>
            <person name="Zhou J."/>
            <person name="Ni P."/>
            <person name="Dong W."/>
            <person name="Hu S."/>
            <person name="Zeng C."/>
            <person name="Zhang J."/>
            <person name="Zhang Y."/>
            <person name="Li R."/>
            <person name="Xu Z."/>
            <person name="Li S."/>
            <person name="Li X."/>
            <person name="Zheng H."/>
            <person name="Cong L."/>
            <person name="Lin L."/>
            <person name="Yin J."/>
            <person name="Geng J."/>
            <person name="Li G."/>
            <person name="Shi J."/>
            <person name="Liu J."/>
            <person name="Lv H."/>
            <person name="Li J."/>
            <person name="Wang J."/>
            <person name="Deng Y."/>
            <person name="Ran L."/>
            <person name="Shi X."/>
            <person name="Wang X."/>
            <person name="Wu Q."/>
            <person name="Li C."/>
            <person name="Ren X."/>
            <person name="Wang J."/>
            <person name="Wang X."/>
            <person name="Li D."/>
            <person name="Liu D."/>
            <person name="Zhang X."/>
            <person name="Ji Z."/>
            <person name="Zhao W."/>
            <person name="Sun Y."/>
            <person name="Zhang Z."/>
            <person name="Bao J."/>
            <person name="Han Y."/>
            <person name="Dong L."/>
            <person name="Ji J."/>
            <person name="Chen P."/>
            <person name="Wu S."/>
            <person name="Liu J."/>
            <person name="Xiao Y."/>
            <person name="Bu D."/>
            <person name="Tan J."/>
            <person name="Yang L."/>
            <person name="Ye C."/>
            <person name="Zhang J."/>
            <person name="Xu J."/>
            <person name="Zhou Y."/>
            <person name="Yu Y."/>
            <person name="Zhang B."/>
            <person name="Zhuang S."/>
            <person name="Wei H."/>
            <person name="Liu B."/>
            <person name="Lei M."/>
            <person name="Yu H."/>
            <person name="Li Y."/>
            <person name="Xu H."/>
            <person name="Wei S."/>
            <person name="He X."/>
            <person name="Fang L."/>
            <person name="Zhang Z."/>
            <person name="Zhang Y."/>
            <person name="Huang X."/>
            <person name="Su Z."/>
            <person name="Tong W."/>
            <person name="Li J."/>
            <person name="Tong Z."/>
            <person name="Li S."/>
            <person name="Ye J."/>
            <person name="Wang L."/>
            <person name="Fang L."/>
            <person name="Lei T."/>
            <person name="Chen C.-S."/>
            <person name="Chen H.-C."/>
            <person name="Xu Z."/>
            <person name="Li H."/>
            <person name="Huang H."/>
            <person name="Zhang F."/>
            <person name="Xu H."/>
            <person name="Li N."/>
            <person name="Zhao C."/>
            <person name="Li S."/>
            <person name="Dong L."/>
            <person name="Huang Y."/>
            <person name="Li L."/>
            <person name="Xi Y."/>
            <person name="Qi Q."/>
            <person name="Li W."/>
            <person name="Zhang B."/>
            <person name="Hu W."/>
            <person name="Zhang Y."/>
            <person name="Tian X."/>
            <person name="Jiao Y."/>
            <person name="Liang X."/>
            <person name="Jin J."/>
            <person name="Gao L."/>
            <person name="Zheng W."/>
            <person name="Hao B."/>
            <person name="Liu S.-M."/>
            <person name="Wang W."/>
            <person name="Yuan L."/>
            <person name="Cao M."/>
            <person name="McDermott J."/>
            <person name="Samudrala R."/>
            <person name="Wang J."/>
            <person name="Wong G.K.-S."/>
            <person name="Yang H."/>
        </authorList>
    </citation>
    <scope>NUCLEOTIDE SEQUENCE [LARGE SCALE GENOMIC DNA]</scope>
    <source>
        <strain>cv. 93-11</strain>
    </source>
</reference>
<sequence>MAAYTSKIFALFALIALSASATTAITTMQYFPPTLAMGTMDPCRQYMMQTLGMGSSTAMFMSQPMALLQQQCCMQLQGMMPQCHCGTSCQMMQSMQQVICAGLGQQQMMKMAMQMPYMCNMAPVNFQLSSCGCC</sequence>
<keyword id="KW-1185">Reference proteome</keyword>
<keyword id="KW-0708">Seed storage protein</keyword>
<keyword id="KW-0732">Signal</keyword>
<keyword id="KW-0758">Storage protein</keyword>
<keyword id="KW-0926">Vacuole</keyword>
<gene>
    <name type="ORF">OsI_013205</name>
</gene>
<dbReference type="EMBL" id="L36604">
    <property type="protein sequence ID" value="AAA50318.1"/>
    <property type="molecule type" value="Genomic_DNA"/>
</dbReference>
<dbReference type="EMBL" id="X84649">
    <property type="protein sequence ID" value="CAA59142.1"/>
    <property type="molecule type" value="mRNA"/>
</dbReference>
<dbReference type="EMBL" id="X81970">
    <property type="protein sequence ID" value="CAA57495.1"/>
    <property type="molecule type" value="Genomic_DNA"/>
</dbReference>
<dbReference type="EMBL" id="CM000128">
    <property type="status" value="NOT_ANNOTATED_CDS"/>
    <property type="molecule type" value="Genomic_DNA"/>
</dbReference>
<dbReference type="PIR" id="S52392">
    <property type="entry name" value="S52392"/>
</dbReference>
<dbReference type="SMR" id="A2XMB2"/>
<dbReference type="STRING" id="39946.A2XMB2"/>
<dbReference type="Proteomes" id="UP000007015">
    <property type="component" value="Chromosome 3"/>
</dbReference>
<dbReference type="GO" id="GO:0033095">
    <property type="term" value="C:aleurone grain"/>
    <property type="evidence" value="ECO:0007669"/>
    <property type="project" value="UniProtKB-SubCell"/>
</dbReference>
<dbReference type="GO" id="GO:0005773">
    <property type="term" value="C:vacuole"/>
    <property type="evidence" value="ECO:0007669"/>
    <property type="project" value="UniProtKB-KW"/>
</dbReference>
<dbReference type="GO" id="GO:0045735">
    <property type="term" value="F:nutrient reservoir activity"/>
    <property type="evidence" value="ECO:0007669"/>
    <property type="project" value="UniProtKB-KW"/>
</dbReference>
<dbReference type="Gene3D" id="1.10.110.10">
    <property type="entry name" value="Plant lipid-transfer and hydrophobic proteins"/>
    <property type="match status" value="1"/>
</dbReference>
<dbReference type="InterPro" id="IPR036312">
    <property type="entry name" value="Bifun_inhib/LTP/seed_sf"/>
</dbReference>
<dbReference type="InterPro" id="IPR016140">
    <property type="entry name" value="Bifunc_inhib/LTP/seed_store"/>
</dbReference>
<dbReference type="Pfam" id="PF00234">
    <property type="entry name" value="Tryp_alpha_amyl"/>
    <property type="match status" value="1"/>
</dbReference>
<dbReference type="SUPFAM" id="SSF47699">
    <property type="entry name" value="Bifunctional inhibitor/lipid-transfer protein/seed storage 2S albumin"/>
    <property type="match status" value="1"/>
</dbReference>
<name>PROA_ORYSI</name>
<proteinExistence type="evidence at transcript level"/>
<organism>
    <name type="scientific">Oryza sativa subsp. indica</name>
    <name type="common">Rice</name>
    <dbReference type="NCBI Taxonomy" id="39946"/>
    <lineage>
        <taxon>Eukaryota</taxon>
        <taxon>Viridiplantae</taxon>
        <taxon>Streptophyta</taxon>
        <taxon>Embryophyta</taxon>
        <taxon>Tracheophyta</taxon>
        <taxon>Spermatophyta</taxon>
        <taxon>Magnoliopsida</taxon>
        <taxon>Liliopsida</taxon>
        <taxon>Poales</taxon>
        <taxon>Poaceae</taxon>
        <taxon>BOP clade</taxon>
        <taxon>Oryzoideae</taxon>
        <taxon>Oryzeae</taxon>
        <taxon>Oryzinae</taxon>
        <taxon>Oryza</taxon>
        <taxon>Oryza sativa</taxon>
    </lineage>
</organism>
<protein>
    <recommendedName>
        <fullName>10 kDa prolamin</fullName>
    </recommendedName>
</protein>
<comment type="function">
    <text>Seed storage protein; serves as a source of nitrogen, carbon and sulfur for the young developing seedling.</text>
</comment>
<comment type="subcellular location">
    <subcellularLocation>
        <location>Vacuole</location>
        <location>Aleurone grain</location>
    </subcellularLocation>
    <text>In rice, prolamin accumulates as a type I protein body which originates directly from the endoplasmic reticulum.</text>
</comment>
<comment type="similarity">
    <text evidence="1">Belongs to the prolamin family.</text>
</comment>